<accession>P39047</accession>
<reference key="1">
    <citation type="journal article" date="1993" name="FEBS Lett.">
        <title>Cloning, expression and sequence analysis of cDNA for the Ca(2+)-binding photoprotein, mitrocomin.</title>
        <authorList>
            <person name="Fagan T.F."/>
            <person name="Ohmiya Y."/>
            <person name="Blinks J.R."/>
            <person name="Inouye S."/>
            <person name="Tsuji F.I."/>
        </authorList>
    </citation>
    <scope>NUCLEOTIDE SEQUENCE [MRNA]</scope>
</reference>
<dbReference type="EMBL" id="L31623">
    <property type="protein sequence ID" value="AAA29298.1"/>
    <property type="molecule type" value="mRNA"/>
</dbReference>
<dbReference type="PIR" id="S39022">
    <property type="entry name" value="S39022"/>
</dbReference>
<dbReference type="PDB" id="4NQG">
    <property type="method" value="X-ray"/>
    <property type="resolution" value="1.30 A"/>
    <property type="chains" value="A/B=2-198"/>
</dbReference>
<dbReference type="PDBsum" id="4NQG"/>
<dbReference type="SMR" id="P39047"/>
<dbReference type="EvolutionaryTrace" id="P39047"/>
<dbReference type="GO" id="GO:0005509">
    <property type="term" value="F:calcium ion binding"/>
    <property type="evidence" value="ECO:0007669"/>
    <property type="project" value="InterPro"/>
</dbReference>
<dbReference type="GO" id="GO:0008218">
    <property type="term" value="P:bioluminescence"/>
    <property type="evidence" value="ECO:0007669"/>
    <property type="project" value="UniProtKB-KW"/>
</dbReference>
<dbReference type="CDD" id="cd00051">
    <property type="entry name" value="EFh"/>
    <property type="match status" value="1"/>
</dbReference>
<dbReference type="Gene3D" id="1.10.238.10">
    <property type="entry name" value="EF-hand"/>
    <property type="match status" value="1"/>
</dbReference>
<dbReference type="InterPro" id="IPR011992">
    <property type="entry name" value="EF-hand-dom_pair"/>
</dbReference>
<dbReference type="InterPro" id="IPR018247">
    <property type="entry name" value="EF_Hand_1_Ca_BS"/>
</dbReference>
<dbReference type="InterPro" id="IPR002048">
    <property type="entry name" value="EF_hand_dom"/>
</dbReference>
<dbReference type="Pfam" id="PF13202">
    <property type="entry name" value="EF-hand_5"/>
    <property type="match status" value="1"/>
</dbReference>
<dbReference type="Pfam" id="PF13499">
    <property type="entry name" value="EF-hand_7"/>
    <property type="match status" value="1"/>
</dbReference>
<dbReference type="SMART" id="SM00054">
    <property type="entry name" value="EFh"/>
    <property type="match status" value="3"/>
</dbReference>
<dbReference type="SUPFAM" id="SSF47473">
    <property type="entry name" value="EF-hand"/>
    <property type="match status" value="1"/>
</dbReference>
<dbReference type="PROSITE" id="PS00018">
    <property type="entry name" value="EF_HAND_1"/>
    <property type="match status" value="3"/>
</dbReference>
<dbReference type="PROSITE" id="PS50222">
    <property type="entry name" value="EF_HAND_2"/>
    <property type="match status" value="3"/>
</dbReference>
<protein>
    <recommendedName>
        <fullName>Mitrocomin</fullName>
    </recommendedName>
</protein>
<comment type="function">
    <text>Ca(2+)-dependent bioluminescence photoprotein. Displays an emission peak at 470 nm (blue light). Trace amounts of calcium ion trigger the intramolecular oxidation of the chromophore, coelenterazine into coelenteramide and CO(2) with the concomitant emission of light.</text>
</comment>
<comment type="similarity">
    <text evidence="3">Belongs to the aequorin family.</text>
</comment>
<sequence length="198" mass="22714">MSMGSRYAVKLTTDFDNPKWIARHKHMFNFLDINSNGQINLNEMVHKASNIICKKLGATEEQTKRHQKCVEDFFGGAGLEYDKDTTWPEYIEGWKRLAKTELERHSKNQVTLIRLWGDALFDIIDKDRNGSVSLDEWIQYTHCAGIQQSRGQCEATFAHCDLDGDGKLDVDEMTRQHLGFWYSVDPTCEGLYGGAVPY</sequence>
<name>MYTR_MITCE</name>
<gene>
    <name type="primary">MI17</name>
</gene>
<feature type="propeptide" id="PRO_0000004132" evidence="1">
    <location>
        <begin position="1"/>
        <end position="8"/>
    </location>
</feature>
<feature type="chain" id="PRO_0000004133" description="Mitrocomin">
    <location>
        <begin position="9"/>
        <end position="198"/>
    </location>
</feature>
<feature type="domain" description="EF-hand 1" evidence="2">
    <location>
        <begin position="19"/>
        <end position="54"/>
    </location>
</feature>
<feature type="domain" description="EF-hand 2" evidence="2">
    <location>
        <begin position="118"/>
        <end position="147"/>
    </location>
</feature>
<feature type="domain" description="EF-hand 3" evidence="2">
    <location>
        <begin position="148"/>
        <end position="183"/>
    </location>
</feature>
<feature type="binding site" evidence="2">
    <location>
        <position position="32"/>
    </location>
    <ligand>
        <name>Ca(2+)</name>
        <dbReference type="ChEBI" id="CHEBI:29108"/>
        <label>1</label>
    </ligand>
</feature>
<feature type="binding site" evidence="2">
    <location>
        <position position="34"/>
    </location>
    <ligand>
        <name>Ca(2+)</name>
        <dbReference type="ChEBI" id="CHEBI:29108"/>
        <label>1</label>
    </ligand>
</feature>
<feature type="binding site" evidence="2">
    <location>
        <position position="36"/>
    </location>
    <ligand>
        <name>Ca(2+)</name>
        <dbReference type="ChEBI" id="CHEBI:29108"/>
        <label>1</label>
    </ligand>
</feature>
<feature type="binding site" evidence="2">
    <location>
        <position position="38"/>
    </location>
    <ligand>
        <name>Ca(2+)</name>
        <dbReference type="ChEBI" id="CHEBI:29108"/>
        <label>1</label>
    </ligand>
</feature>
<feature type="binding site" evidence="2">
    <location>
        <position position="43"/>
    </location>
    <ligand>
        <name>Ca(2+)</name>
        <dbReference type="ChEBI" id="CHEBI:29108"/>
        <label>1</label>
    </ligand>
</feature>
<feature type="binding site" evidence="2">
    <location>
        <position position="125"/>
    </location>
    <ligand>
        <name>Ca(2+)</name>
        <dbReference type="ChEBI" id="CHEBI:29108"/>
        <label>2</label>
    </ligand>
</feature>
<feature type="binding site" evidence="2">
    <location>
        <position position="127"/>
    </location>
    <ligand>
        <name>Ca(2+)</name>
        <dbReference type="ChEBI" id="CHEBI:29108"/>
        <label>2</label>
    </ligand>
</feature>
<feature type="binding site" evidence="2">
    <location>
        <position position="129"/>
    </location>
    <ligand>
        <name>Ca(2+)</name>
        <dbReference type="ChEBI" id="CHEBI:29108"/>
        <label>2</label>
    </ligand>
</feature>
<feature type="binding site" evidence="2">
    <location>
        <position position="131"/>
    </location>
    <ligand>
        <name>Ca(2+)</name>
        <dbReference type="ChEBI" id="CHEBI:29108"/>
        <label>2</label>
    </ligand>
</feature>
<feature type="binding site" evidence="2">
    <location>
        <position position="136"/>
    </location>
    <ligand>
        <name>Ca(2+)</name>
        <dbReference type="ChEBI" id="CHEBI:29108"/>
        <label>2</label>
    </ligand>
</feature>
<feature type="binding site" evidence="2">
    <location>
        <position position="161"/>
    </location>
    <ligand>
        <name>Ca(2+)</name>
        <dbReference type="ChEBI" id="CHEBI:29108"/>
        <label>3</label>
    </ligand>
</feature>
<feature type="binding site" evidence="2">
    <location>
        <position position="163"/>
    </location>
    <ligand>
        <name>Ca(2+)</name>
        <dbReference type="ChEBI" id="CHEBI:29108"/>
        <label>3</label>
    </ligand>
</feature>
<feature type="binding site" evidence="2">
    <location>
        <position position="165"/>
    </location>
    <ligand>
        <name>Ca(2+)</name>
        <dbReference type="ChEBI" id="CHEBI:29108"/>
        <label>3</label>
    </ligand>
</feature>
<feature type="binding site" evidence="2">
    <location>
        <position position="167"/>
    </location>
    <ligand>
        <name>Ca(2+)</name>
        <dbReference type="ChEBI" id="CHEBI:29108"/>
        <label>3</label>
    </ligand>
</feature>
<feature type="binding site" evidence="2">
    <location>
        <position position="172"/>
    </location>
    <ligand>
        <name>Ca(2+)</name>
        <dbReference type="ChEBI" id="CHEBI:29108"/>
        <label>3</label>
    </ligand>
</feature>
<feature type="helix" evidence="4">
    <location>
        <begin position="18"/>
        <end position="31"/>
    </location>
</feature>
<feature type="strand" evidence="4">
    <location>
        <begin position="36"/>
        <end position="39"/>
    </location>
</feature>
<feature type="helix" evidence="4">
    <location>
        <begin position="41"/>
        <end position="50"/>
    </location>
</feature>
<feature type="helix" evidence="4">
    <location>
        <begin position="52"/>
        <end position="55"/>
    </location>
</feature>
<feature type="helix" evidence="4">
    <location>
        <begin position="60"/>
        <end position="76"/>
    </location>
</feature>
<feature type="helix" evidence="4">
    <location>
        <begin position="87"/>
        <end position="106"/>
    </location>
</feature>
<feature type="helix" evidence="4">
    <location>
        <begin position="112"/>
        <end position="124"/>
    </location>
</feature>
<feature type="strand" evidence="4">
    <location>
        <begin position="129"/>
        <end position="132"/>
    </location>
</feature>
<feature type="helix" evidence="4">
    <location>
        <begin position="134"/>
        <end position="144"/>
    </location>
</feature>
<feature type="helix" evidence="4">
    <location>
        <begin position="150"/>
        <end position="159"/>
    </location>
</feature>
<feature type="helix" evidence="4">
    <location>
        <begin position="170"/>
        <end position="181"/>
    </location>
</feature>
<feature type="helix" evidence="4">
    <location>
        <begin position="186"/>
        <end position="188"/>
    </location>
</feature>
<feature type="turn" evidence="4">
    <location>
        <begin position="189"/>
        <end position="194"/>
    </location>
</feature>
<evidence type="ECO:0000255" key="1"/>
<evidence type="ECO:0000255" key="2">
    <source>
        <dbReference type="PROSITE-ProRule" id="PRU00448"/>
    </source>
</evidence>
<evidence type="ECO:0000305" key="3"/>
<evidence type="ECO:0007829" key="4">
    <source>
        <dbReference type="PDB" id="4NQG"/>
    </source>
</evidence>
<keyword id="KW-0002">3D-structure</keyword>
<keyword id="KW-0106">Calcium</keyword>
<keyword id="KW-0455">Luminescence</keyword>
<keyword id="KW-0479">Metal-binding</keyword>
<keyword id="KW-0599">Photoprotein</keyword>
<keyword id="KW-0677">Repeat</keyword>
<proteinExistence type="evidence at protein level"/>
<organism>
    <name type="scientific">Mitrocoma cellularia</name>
    <name type="common">Cross jellyfish</name>
    <name type="synonym">Earleria cellularia</name>
    <dbReference type="NCBI Taxonomy" id="31874"/>
    <lineage>
        <taxon>Eukaryota</taxon>
        <taxon>Metazoa</taxon>
        <taxon>Cnidaria</taxon>
        <taxon>Hydrozoa</taxon>
        <taxon>Hydroidolina</taxon>
        <taxon>Leptothecata</taxon>
        <taxon>Mitrocomidae</taxon>
        <taxon>Mitrocoma</taxon>
    </lineage>
</organism>